<name>FOXN5_XENTR</name>
<comment type="subcellular location">
    <subcellularLocation>
        <location evidence="4">Nucleus</location>
    </subcellularLocation>
</comment>
<evidence type="ECO:0000250" key="1">
    <source>
        <dbReference type="UniProtKB" id="Q3BJS0"/>
    </source>
</evidence>
<evidence type="ECO:0000255" key="2">
    <source>
        <dbReference type="PROSITE-ProRule" id="PRU00089"/>
    </source>
</evidence>
<evidence type="ECO:0000256" key="3">
    <source>
        <dbReference type="SAM" id="MobiDB-lite"/>
    </source>
</evidence>
<evidence type="ECO:0000305" key="4"/>
<evidence type="ECO:0000312" key="5">
    <source>
        <dbReference type="EMBL" id="CAJ83658.1"/>
    </source>
</evidence>
<gene>
    <name evidence="1" type="primary">foxn5</name>
    <name type="ORF">TEgg028l11.1</name>
</gene>
<feature type="chain" id="PRO_0000247738" description="Forkhead box protein N5">
    <location>
        <begin position="1"/>
        <end position="293"/>
    </location>
</feature>
<feature type="DNA-binding region" description="Fork-head" evidence="2">
    <location>
        <begin position="176"/>
        <end position="273"/>
    </location>
</feature>
<feature type="region of interest" description="Disordered" evidence="3">
    <location>
        <begin position="104"/>
        <end position="152"/>
    </location>
</feature>
<feature type="compositionally biased region" description="Polar residues" evidence="3">
    <location>
        <begin position="106"/>
        <end position="119"/>
    </location>
</feature>
<organism>
    <name type="scientific">Xenopus tropicalis</name>
    <name type="common">Western clawed frog</name>
    <name type="synonym">Silurana tropicalis</name>
    <dbReference type="NCBI Taxonomy" id="8364"/>
    <lineage>
        <taxon>Eukaryota</taxon>
        <taxon>Metazoa</taxon>
        <taxon>Chordata</taxon>
        <taxon>Craniata</taxon>
        <taxon>Vertebrata</taxon>
        <taxon>Euteleostomi</taxon>
        <taxon>Amphibia</taxon>
        <taxon>Batrachia</taxon>
        <taxon>Anura</taxon>
        <taxon>Pipoidea</taxon>
        <taxon>Pipidae</taxon>
        <taxon>Xenopodinae</taxon>
        <taxon>Xenopus</taxon>
        <taxon>Silurana</taxon>
    </lineage>
</organism>
<reference evidence="5" key="1">
    <citation type="submission" date="2006-03" db="EMBL/GenBank/DDBJ databases">
        <authorList>
            <consortium name="Sanger Xenopus tropicalis EST/cDNA project"/>
        </authorList>
    </citation>
    <scope>NUCLEOTIDE SEQUENCE [LARGE SCALE MRNA]</scope>
    <source>
        <tissue>Egg</tissue>
    </source>
</reference>
<keyword id="KW-0238">DNA-binding</keyword>
<keyword id="KW-0539">Nucleus</keyword>
<keyword id="KW-1185">Reference proteome</keyword>
<keyword id="KW-0804">Transcription</keyword>
<keyword id="KW-0805">Transcription regulation</keyword>
<proteinExistence type="evidence at transcript level"/>
<protein>
    <recommendedName>
        <fullName>Forkhead box protein N5</fullName>
    </recommendedName>
</protein>
<sequence length="293" mass="34230">MYLRFANRKPYEKLHLSTALEDWDMSEELKLSITADQYFAGADDKVERYTLRRQHSTEVSPTRSEEGDYQECTFRPSLWLVVDPNLVIPCPEWINRIPPEPELTSPPLQLQRQLSNDYSTVEDSEDEAPTSCSDVLTDDDDSYNPWQPKHKRKKAKCLGKKLRVQKGLTQLESWPRPPLNYCNLISLALRNSEDGSLNVQQIYSFVREHFPFFRIAPDGWKNTVRHNLCFSSSFEKSSGWVCADGHRRSCLWKLTRQGRRKFRNEMHALSDDLLHVLRKSMKKPALMELMFGM</sequence>
<accession>Q28H65</accession>
<dbReference type="EMBL" id="CR761025">
    <property type="protein sequence ID" value="CAJ83658.1"/>
    <property type="molecule type" value="mRNA"/>
</dbReference>
<dbReference type="RefSeq" id="NP_001037918.1">
    <property type="nucleotide sequence ID" value="NM_001044453.1"/>
</dbReference>
<dbReference type="SMR" id="Q28H65"/>
<dbReference type="FunCoup" id="Q28H65">
    <property type="interactions" value="247"/>
</dbReference>
<dbReference type="STRING" id="8364.ENSXETP00000017716"/>
<dbReference type="PaxDb" id="8364-ENSXETP00000046597"/>
<dbReference type="DNASU" id="733531"/>
<dbReference type="GeneID" id="733531"/>
<dbReference type="KEGG" id="xtr:733531"/>
<dbReference type="AGR" id="Xenbase:XB-GENE-484980"/>
<dbReference type="CTD" id="283150"/>
<dbReference type="Xenbase" id="XB-GENE-484980">
    <property type="gene designation" value="foxr1"/>
</dbReference>
<dbReference type="eggNOG" id="KOG2294">
    <property type="taxonomic scope" value="Eukaryota"/>
</dbReference>
<dbReference type="InParanoid" id="Q28H65"/>
<dbReference type="OMA" id="FFWTAPD"/>
<dbReference type="OrthoDB" id="10070006at2759"/>
<dbReference type="PhylomeDB" id="Q28H65"/>
<dbReference type="Proteomes" id="UP000008143">
    <property type="component" value="Chromosome 7"/>
</dbReference>
<dbReference type="GO" id="GO:0005634">
    <property type="term" value="C:nucleus"/>
    <property type="evidence" value="ECO:0007669"/>
    <property type="project" value="UniProtKB-SubCell"/>
</dbReference>
<dbReference type="GO" id="GO:0003700">
    <property type="term" value="F:DNA-binding transcription factor activity"/>
    <property type="evidence" value="ECO:0007669"/>
    <property type="project" value="InterPro"/>
</dbReference>
<dbReference type="GO" id="GO:0043565">
    <property type="term" value="F:sequence-specific DNA binding"/>
    <property type="evidence" value="ECO:0007669"/>
    <property type="project" value="InterPro"/>
</dbReference>
<dbReference type="CDD" id="cd20036">
    <property type="entry name" value="FH_FOXR"/>
    <property type="match status" value="1"/>
</dbReference>
<dbReference type="Gene3D" id="1.10.10.10">
    <property type="entry name" value="Winged helix-like DNA-binding domain superfamily/Winged helix DNA-binding domain"/>
    <property type="match status" value="1"/>
</dbReference>
<dbReference type="InterPro" id="IPR001766">
    <property type="entry name" value="Fork_head_dom"/>
</dbReference>
<dbReference type="InterPro" id="IPR052328">
    <property type="entry name" value="FOX_transcription_regulators"/>
</dbReference>
<dbReference type="InterPro" id="IPR036388">
    <property type="entry name" value="WH-like_DNA-bd_sf"/>
</dbReference>
<dbReference type="InterPro" id="IPR036390">
    <property type="entry name" value="WH_DNA-bd_sf"/>
</dbReference>
<dbReference type="PANTHER" id="PTHR46789">
    <property type="entry name" value="FORKHEAD BOX PROTEIN R1"/>
    <property type="match status" value="1"/>
</dbReference>
<dbReference type="PANTHER" id="PTHR46789:SF2">
    <property type="entry name" value="FORKHEAD BOX PROTEIN R2"/>
    <property type="match status" value="1"/>
</dbReference>
<dbReference type="Pfam" id="PF00250">
    <property type="entry name" value="Forkhead"/>
    <property type="match status" value="1"/>
</dbReference>
<dbReference type="PRINTS" id="PR00053">
    <property type="entry name" value="FORKHEAD"/>
</dbReference>
<dbReference type="SMART" id="SM00339">
    <property type="entry name" value="FH"/>
    <property type="match status" value="1"/>
</dbReference>
<dbReference type="SUPFAM" id="SSF46785">
    <property type="entry name" value="Winged helix' DNA-binding domain"/>
    <property type="match status" value="1"/>
</dbReference>
<dbReference type="PROSITE" id="PS50039">
    <property type="entry name" value="FORK_HEAD_3"/>
    <property type="match status" value="1"/>
</dbReference>